<feature type="signal peptide" evidence="1">
    <location>
        <begin position="1"/>
        <end position="13"/>
    </location>
</feature>
<feature type="chain" id="PRO_0000037214" description="Spike glycoprotein">
    <location>
        <begin position="15"/>
        <end position="1324"/>
    </location>
</feature>
<feature type="chain" id="PRO_0000037215" description="Spike protein S1">
    <location>
        <begin position="15"/>
        <end position="717"/>
    </location>
</feature>
<feature type="chain" id="PRO_0000037216" description="Spike protein S2">
    <location>
        <begin position="718"/>
        <end position="1324"/>
    </location>
</feature>
<feature type="chain" id="PRO_0000444084" description="Spike protein S2'" evidence="1">
    <location>
        <begin position="870"/>
        <end position="1324"/>
    </location>
</feature>
<feature type="topological domain" description="Extracellular" evidence="1">
    <location>
        <begin position="14"/>
        <end position="1265"/>
    </location>
</feature>
<feature type="transmembrane region" description="Helical" evidence="1">
    <location>
        <begin position="1266"/>
        <end position="1286"/>
    </location>
</feature>
<feature type="topological domain" description="Cytoplasmic" evidence="1">
    <location>
        <begin position="1287"/>
        <end position="1324"/>
    </location>
</feature>
<feature type="domain" description="BetaCoV S1-NTD" evidence="3">
    <location>
        <begin position="15"/>
        <end position="296"/>
    </location>
</feature>
<feature type="domain" description="BetaCoV S1-CTD" evidence="2">
    <location>
        <begin position="327"/>
        <end position="566"/>
    </location>
</feature>
<feature type="region of interest" description="Receptor binding site">
    <location>
        <begin position="17"/>
        <end position="330"/>
    </location>
</feature>
<feature type="region of interest" description="Fusion peptide 1" evidence="1">
    <location>
        <begin position="870"/>
        <end position="891"/>
    </location>
</feature>
<feature type="region of interest" description="Fusion peptide 2" evidence="1">
    <location>
        <begin position="889"/>
        <end position="909"/>
    </location>
</feature>
<feature type="region of interest" description="Heptad repeat 1" evidence="1">
    <location>
        <begin position="970"/>
        <end position="1020"/>
    </location>
</feature>
<feature type="region of interest" description="Heptad repeat 2" evidence="1">
    <location>
        <begin position="1214"/>
        <end position="1254"/>
    </location>
</feature>
<feature type="coiled-coil region" evidence="1">
    <location>
        <begin position="999"/>
        <end position="1043"/>
    </location>
</feature>
<feature type="coiled-coil region" evidence="1">
    <location>
        <begin position="1227"/>
        <end position="1255"/>
    </location>
</feature>
<feature type="short sequence motif" description="KxHxx" evidence="1">
    <location>
        <begin position="1320"/>
        <end position="1324"/>
    </location>
</feature>
<feature type="site" description="Cleavage; by host">
    <location>
        <begin position="717"/>
        <end position="718"/>
    </location>
</feature>
<feature type="site" description="Cleavage" evidence="1">
    <location>
        <begin position="869"/>
        <end position="870"/>
    </location>
</feature>
<feature type="glycosylation site" description="N-linked (GlcNAc...) asparagine; by host" evidence="1">
    <location>
        <position position="31"/>
    </location>
</feature>
<feature type="glycosylation site" description="N-linked (GlcNAc...) asparagine; by host" evidence="1">
    <location>
        <position position="60"/>
    </location>
</feature>
<feature type="glycosylation site" description="N-linked (GlcNAc...) asparagine; by host" evidence="1">
    <location>
        <position position="192"/>
    </location>
</feature>
<feature type="glycosylation site" description="N-linked (GlcNAc...) asparagine; by host" evidence="1">
    <location>
        <position position="357"/>
    </location>
</feature>
<feature type="glycosylation site" description="N-linked (GlcNAc...) asparagine; by host" evidence="1">
    <location>
        <position position="435"/>
    </location>
</feature>
<feature type="glycosylation site" description="N-linked (GlcNAc...) asparagine; by host" evidence="1">
    <location>
        <position position="530"/>
    </location>
</feature>
<feature type="glycosylation site" description="N-linked (GlcNAc...) asparagine; by host" evidence="1">
    <location>
        <position position="625"/>
    </location>
</feature>
<feature type="glycosylation site" description="N-linked (GlcNAc...) asparagine; by host" evidence="1">
    <location>
        <position position="657"/>
    </location>
</feature>
<feature type="glycosylation site" description="N-linked (GlcNAc...) asparagine; by host" evidence="1">
    <location>
        <position position="665"/>
    </location>
</feature>
<feature type="glycosylation site" description="N-linked (GlcNAc...) asparagine; by host" evidence="1">
    <location>
        <position position="688"/>
    </location>
</feature>
<feature type="glycosylation site" description="N-linked (GlcNAc...) asparagine; by host" evidence="1">
    <location>
        <position position="737"/>
    </location>
</feature>
<feature type="glycosylation site" description="N-linked (GlcNAc...) asparagine; by host" evidence="1">
    <location>
        <position position="754"/>
    </location>
</feature>
<feature type="glycosylation site" description="N-linked (GlcNAc...) asparagine; by host" evidence="1">
    <location>
        <position position="893"/>
    </location>
</feature>
<feature type="glycosylation site" description="N-linked (GlcNAc...) asparagine; by host" evidence="1">
    <location>
        <position position="1180"/>
    </location>
</feature>
<feature type="glycosylation site" description="N-linked (GlcNAc...) asparagine; by host" evidence="1">
    <location>
        <position position="1190"/>
    </location>
</feature>
<feature type="glycosylation site" description="N-linked (GlcNAc...) asparagine; by host" evidence="1">
    <location>
        <position position="1209"/>
    </location>
</feature>
<feature type="glycosylation site" description="N-linked (GlcNAc...) asparagine; by host" evidence="1">
    <location>
        <position position="1225"/>
    </location>
</feature>
<feature type="glycosylation site" description="N-linked (GlcNAc...) asparagine; by host" evidence="1">
    <location>
        <position position="1246"/>
    </location>
</feature>
<feature type="disulfide bond" evidence="3">
    <location>
        <begin position="21"/>
        <end position="158"/>
    </location>
</feature>
<feature type="disulfide bond" evidence="3">
    <location>
        <begin position="153"/>
        <end position="187"/>
    </location>
</feature>
<feature type="disulfide bond" evidence="3">
    <location>
        <begin position="165"/>
        <end position="246"/>
    </location>
</feature>
<feature type="disulfide bond" evidence="3">
    <location>
        <begin position="284"/>
        <end position="294"/>
    </location>
</feature>
<feature type="disulfide bond" evidence="2">
    <location>
        <begin position="329"/>
        <end position="354"/>
    </location>
</feature>
<feature type="disulfide bond" evidence="2">
    <location>
        <begin position="372"/>
        <end position="425"/>
    </location>
</feature>
<feature type="disulfide bond" evidence="2">
    <location>
        <begin position="384"/>
        <end position="564"/>
    </location>
</feature>
<feature type="disulfide bond" evidence="1">
    <location>
        <begin position="894"/>
        <end position="905"/>
    </location>
</feature>
<feature type="sequence variant" description="In strain: Isolate C12 mutant.">
    <original>R</original>
    <variation>T</variation>
    <location>
        <position position="82"/>
    </location>
</feature>
<feature type="sequence variant" description="In strain: Isolate C12 mutant.">
    <original>N</original>
    <variation>S</variation>
    <location>
        <position position="98"/>
    </location>
</feature>
<feature type="sequence variant" description="In strain: Isolate C12 mutant; associated with altered pathogenesis.">
    <original>Q</original>
    <variation>L</variation>
    <location>
        <position position="159"/>
    </location>
</feature>
<feature type="sequence variant" description="In strain: Isolate C12 mutant.">
    <original>H</original>
    <variation>D</variation>
    <location>
        <position position="716"/>
    </location>
</feature>
<feature type="mutagenesis site" description="Complete loss of infectivity on murine cells." evidence="5">
    <original>S</original>
    <variation>G</variation>
    <location>
        <position position="33"/>
    </location>
</feature>
<feature type="mutagenesis site" description="No effect for infectivity on murine cells." evidence="5">
    <original>S</original>
    <variation>R</variation>
    <location>
        <position position="33"/>
    </location>
</feature>
<feature type="mutagenesis site" description="No effect for infectivity on murine cells." evidence="5">
    <original>T</original>
    <variation>A</variation>
    <variation>S</variation>
    <location>
        <position position="62"/>
    </location>
</feature>
<feature type="mutagenesis site" description="No effect for infectivity on murine cells." evidence="5">
    <original>L</original>
    <variation>A</variation>
    <variation>H</variation>
    <location>
        <position position="65"/>
    </location>
</feature>
<feature type="mutagenesis site" description="No effect for infectivity on murine cells." evidence="5">
    <original>LALR</original>
    <variation>AALA</variation>
    <location>
        <begin position="79"/>
        <end position="82"/>
    </location>
</feature>
<feature type="mutagenesis site" description="Complete loss of infectivity on murine cells." evidence="5">
    <original>LALR</original>
    <variation>MALM</variation>
    <location>
        <begin position="79"/>
        <end position="82"/>
    </location>
</feature>
<feature type="mutagenesis site" description="Complete loss of infectivity on murine cells." evidence="5">
    <original>Y</original>
    <variation>A</variation>
    <variation>H</variation>
    <variation>Q</variation>
    <location>
        <position position="162"/>
    </location>
</feature>
<feature type="mutagenesis site" description="No effect for infectivity on murine cells." evidence="5">
    <original>Y</original>
    <variation>F</variation>
    <location>
        <position position="162"/>
    </location>
</feature>
<feature type="mutagenesis site" description="Complete loss of infectivity on murine cells." evidence="5">
    <original>K</original>
    <variation>G</variation>
    <location>
        <position position="183"/>
    </location>
</feature>
<feature type="mutagenesis site" description="No effect for infectivity on murine cells." evidence="5">
    <original>K</original>
    <variation>R</variation>
    <location>
        <position position="183"/>
    </location>
</feature>
<feature type="helix" evidence="10">
    <location>
        <begin position="970"/>
        <end position="1015"/>
    </location>
</feature>
<feature type="helix" evidence="10">
    <location>
        <begin position="1040"/>
        <end position="1045"/>
    </location>
</feature>
<feature type="helix" evidence="10">
    <location>
        <begin position="1047"/>
        <end position="1056"/>
    </location>
</feature>
<evidence type="ECO:0000255" key="1">
    <source>
        <dbReference type="HAMAP-Rule" id="MF_04099"/>
    </source>
</evidence>
<evidence type="ECO:0000255" key="2">
    <source>
        <dbReference type="PROSITE-ProRule" id="PRU01269"/>
    </source>
</evidence>
<evidence type="ECO:0000255" key="3">
    <source>
        <dbReference type="PROSITE-ProRule" id="PRU01270"/>
    </source>
</evidence>
<evidence type="ECO:0000269" key="4">
    <source>
    </source>
</evidence>
<evidence type="ECO:0000269" key="5">
    <source>
    </source>
</evidence>
<evidence type="ECO:0000269" key="6">
    <source>
    </source>
</evidence>
<evidence type="ECO:0000269" key="7">
    <source>
    </source>
</evidence>
<evidence type="ECO:0000269" key="8">
    <source>
    </source>
</evidence>
<evidence type="ECO:0000269" key="9">
    <source>
    </source>
</evidence>
<evidence type="ECO:0007829" key="10">
    <source>
        <dbReference type="PDB" id="1WDG"/>
    </source>
</evidence>
<protein>
    <recommendedName>
        <fullName evidence="1">Spike glycoprotein</fullName>
        <shortName evidence="1">S glycoprotein</shortName>
    </recommendedName>
    <alternativeName>
        <fullName evidence="1">E2</fullName>
    </alternativeName>
    <alternativeName>
        <fullName evidence="1">Peplomer protein</fullName>
    </alternativeName>
    <component>
        <recommendedName>
            <fullName evidence="1">Spike protein S1</fullName>
        </recommendedName>
    </component>
    <component>
        <recommendedName>
            <fullName evidence="1">Spike protein S2</fullName>
        </recommendedName>
    </component>
    <component>
        <recommendedName>
            <fullName evidence="1">Spike protein S2'</fullName>
        </recommendedName>
    </component>
</protein>
<organism>
    <name type="scientific">Murine coronavirus (strain A59)</name>
    <name type="common">MHV-A59</name>
    <name type="synonym">Murine hepatitis virus</name>
    <dbReference type="NCBI Taxonomy" id="11142"/>
    <lineage>
        <taxon>Viruses</taxon>
        <taxon>Riboviria</taxon>
        <taxon>Orthornavirae</taxon>
        <taxon>Pisuviricota</taxon>
        <taxon>Pisoniviricetes</taxon>
        <taxon>Nidovirales</taxon>
        <taxon>Cornidovirineae</taxon>
        <taxon>Coronaviridae</taxon>
        <taxon>Orthocoronavirinae</taxon>
        <taxon>Betacoronavirus</taxon>
        <taxon>Embecovirus</taxon>
        <taxon>Murine coronavirus</taxon>
    </lineage>
</organism>
<dbReference type="EMBL" id="M18379">
    <property type="protein sequence ID" value="AAA46455.1"/>
    <property type="molecule type" value="Genomic_RNA"/>
</dbReference>
<dbReference type="EMBL" id="AF029248">
    <property type="protein sequence ID" value="AAB86819.1"/>
    <property type="molecule type" value="Genomic_RNA"/>
</dbReference>
<dbReference type="PIR" id="A27402">
    <property type="entry name" value="VGIH59"/>
</dbReference>
<dbReference type="RefSeq" id="NP_045300.1">
    <property type="nucleotide sequence ID" value="NC_001846.1"/>
</dbReference>
<dbReference type="PDB" id="1WDF">
    <property type="method" value="X-ray"/>
    <property type="resolution" value="2.50 A"/>
    <property type="chains" value="A/B=969-1024, A/B=1216-1254"/>
</dbReference>
<dbReference type="PDB" id="1WDG">
    <property type="method" value="X-ray"/>
    <property type="resolution" value="2.06 A"/>
    <property type="chains" value="A/B=969-1017, A/B=1224-1254"/>
</dbReference>
<dbReference type="PDB" id="3JCL">
    <property type="method" value="EM"/>
    <property type="resolution" value="4.00 A"/>
    <property type="chains" value="A/B/C=15-1231"/>
</dbReference>
<dbReference type="PDB" id="6B3O">
    <property type="method" value="EM"/>
    <property type="resolution" value="4.10 A"/>
    <property type="chains" value="A/B/C=714-1252"/>
</dbReference>
<dbReference type="PDB" id="6VSJ">
    <property type="method" value="EM"/>
    <property type="resolution" value="3.94 A"/>
    <property type="chains" value="A/B/C=15-1228"/>
</dbReference>
<dbReference type="PDBsum" id="1WDF"/>
<dbReference type="PDBsum" id="1WDG"/>
<dbReference type="PDBsum" id="3JCL"/>
<dbReference type="PDBsum" id="6B3O"/>
<dbReference type="PDBsum" id="6VSJ"/>
<dbReference type="EMDB" id="EMD-21377"/>
<dbReference type="EMDB" id="EMD-6526"/>
<dbReference type="EMDB" id="EMD-7040"/>
<dbReference type="SMR" id="P11224"/>
<dbReference type="DIP" id="DIP-61967N"/>
<dbReference type="IntAct" id="P11224">
    <property type="interactions" value="2"/>
</dbReference>
<dbReference type="GlyCosmos" id="P11224">
    <property type="glycosylation" value="18 sites, No reported glycans"/>
</dbReference>
<dbReference type="SwissPalm" id="P11224"/>
<dbReference type="ABCD" id="P11224">
    <property type="antibodies" value="1 sequenced antibody"/>
</dbReference>
<dbReference type="GeneID" id="1489752"/>
<dbReference type="KEGG" id="vg:1489752"/>
<dbReference type="EvolutionaryTrace" id="P11224"/>
<dbReference type="Proteomes" id="UP000007192">
    <property type="component" value="Segment"/>
</dbReference>
<dbReference type="GO" id="GO:0044173">
    <property type="term" value="C:host cell endoplasmic reticulum-Golgi intermediate compartment membrane"/>
    <property type="evidence" value="ECO:0007669"/>
    <property type="project" value="UniProtKB-SubCell"/>
</dbReference>
<dbReference type="GO" id="GO:0044177">
    <property type="term" value="C:host cell Golgi apparatus"/>
    <property type="evidence" value="ECO:0000314"/>
    <property type="project" value="CACAO"/>
</dbReference>
<dbReference type="GO" id="GO:0020002">
    <property type="term" value="C:host cell plasma membrane"/>
    <property type="evidence" value="ECO:0007669"/>
    <property type="project" value="UniProtKB-SubCell"/>
</dbReference>
<dbReference type="GO" id="GO:0016020">
    <property type="term" value="C:membrane"/>
    <property type="evidence" value="ECO:0007669"/>
    <property type="project" value="UniProtKB-UniRule"/>
</dbReference>
<dbReference type="GO" id="GO:0019031">
    <property type="term" value="C:viral envelope"/>
    <property type="evidence" value="ECO:0007669"/>
    <property type="project" value="UniProtKB-UniRule"/>
</dbReference>
<dbReference type="GO" id="GO:0055036">
    <property type="term" value="C:virion membrane"/>
    <property type="evidence" value="ECO:0007669"/>
    <property type="project" value="UniProtKB-SubCell"/>
</dbReference>
<dbReference type="GO" id="GO:0042802">
    <property type="term" value="F:identical protein binding"/>
    <property type="evidence" value="ECO:0000353"/>
    <property type="project" value="IntAct"/>
</dbReference>
<dbReference type="GO" id="GO:0075509">
    <property type="term" value="P:endocytosis involved in viral entry into host cell"/>
    <property type="evidence" value="ECO:0007669"/>
    <property type="project" value="UniProtKB-UniRule"/>
</dbReference>
<dbReference type="GO" id="GO:0039654">
    <property type="term" value="P:fusion of virus membrane with host endosome membrane"/>
    <property type="evidence" value="ECO:0007669"/>
    <property type="project" value="UniProtKB-UniRule"/>
</dbReference>
<dbReference type="GO" id="GO:0019064">
    <property type="term" value="P:fusion of virus membrane with host plasma membrane"/>
    <property type="evidence" value="ECO:0007669"/>
    <property type="project" value="UniProtKB-UniRule"/>
</dbReference>
<dbReference type="GO" id="GO:0046813">
    <property type="term" value="P:receptor-mediated virion attachment to host cell"/>
    <property type="evidence" value="ECO:0007669"/>
    <property type="project" value="UniProtKB-UniRule"/>
</dbReference>
<dbReference type="CDD" id="cd22380">
    <property type="entry name" value="HKU1-CoV-like_Spike_SD1-2_S1-S2_S2"/>
    <property type="match status" value="1"/>
</dbReference>
<dbReference type="CDD" id="cd21625">
    <property type="entry name" value="MHV-like_Spike_S1_NTD"/>
    <property type="match status" value="1"/>
</dbReference>
<dbReference type="CDD" id="cd21484">
    <property type="entry name" value="MHV-like_Spike_S1_RBD"/>
    <property type="match status" value="1"/>
</dbReference>
<dbReference type="FunFam" id="1.20.5.300:FF:000003">
    <property type="entry name" value="Spike glycoprotein"/>
    <property type="match status" value="1"/>
</dbReference>
<dbReference type="FunFam" id="1.20.5.300:FF:000006">
    <property type="entry name" value="Spike glycoprotein"/>
    <property type="match status" value="1"/>
</dbReference>
<dbReference type="FunFam" id="2.60.120.960:FF:000002">
    <property type="entry name" value="Spike glycoprotein"/>
    <property type="match status" value="1"/>
</dbReference>
<dbReference type="Gene3D" id="1.20.5.300">
    <property type="match status" value="2"/>
</dbReference>
<dbReference type="Gene3D" id="3.30.70.1840">
    <property type="match status" value="1"/>
</dbReference>
<dbReference type="Gene3D" id="2.60.120.960">
    <property type="entry name" value="Spike glycoprotein, N-terminal domain"/>
    <property type="match status" value="1"/>
</dbReference>
<dbReference type="HAMAP" id="MF_04099">
    <property type="entry name" value="BETA_CORONA_SPIKE"/>
    <property type="match status" value="1"/>
</dbReference>
<dbReference type="InterPro" id="IPR032500">
    <property type="entry name" value="bCoV_S1_N"/>
</dbReference>
<dbReference type="InterPro" id="IPR042578">
    <property type="entry name" value="BETA_CORONA_SPIKE"/>
</dbReference>
<dbReference type="InterPro" id="IPR043607">
    <property type="entry name" value="CoV_S1_C"/>
</dbReference>
<dbReference type="InterPro" id="IPR043473">
    <property type="entry name" value="S2_sf_CoV"/>
</dbReference>
<dbReference type="InterPro" id="IPR043002">
    <property type="entry name" value="Spike_N_sf"/>
</dbReference>
<dbReference type="InterPro" id="IPR044339">
    <property type="entry name" value="Spike_S1_NTD_MHV-like"/>
</dbReference>
<dbReference type="InterPro" id="IPR018548">
    <property type="entry name" value="Spike_S1_RBD_bCoV"/>
</dbReference>
<dbReference type="InterPro" id="IPR036326">
    <property type="entry name" value="Spike_S1_RBD_sf_bCoV"/>
</dbReference>
<dbReference type="InterPro" id="IPR002552">
    <property type="entry name" value="Spike_S2_CoV"/>
</dbReference>
<dbReference type="InterPro" id="IPR043614">
    <property type="entry name" value="Spike_S2_CoV_C"/>
</dbReference>
<dbReference type="InterPro" id="IPR044873">
    <property type="entry name" value="Spike_S2_CoV_HR1"/>
</dbReference>
<dbReference type="InterPro" id="IPR044874">
    <property type="entry name" value="Spike_S2_CoV_HR2"/>
</dbReference>
<dbReference type="Pfam" id="PF16451">
    <property type="entry name" value="bCoV_S1_N"/>
    <property type="match status" value="1"/>
</dbReference>
<dbReference type="Pfam" id="PF09408">
    <property type="entry name" value="bCoV_S1_RBD"/>
    <property type="match status" value="1"/>
</dbReference>
<dbReference type="Pfam" id="PF19209">
    <property type="entry name" value="CoV_S1_C"/>
    <property type="match status" value="1"/>
</dbReference>
<dbReference type="Pfam" id="PF01601">
    <property type="entry name" value="CoV_S2"/>
    <property type="match status" value="1"/>
</dbReference>
<dbReference type="Pfam" id="PF19214">
    <property type="entry name" value="CoV_S2_C"/>
    <property type="match status" value="1"/>
</dbReference>
<dbReference type="SUPFAM" id="SSF111474">
    <property type="entry name" value="Coronavirus S2 glycoprotein"/>
    <property type="match status" value="2"/>
</dbReference>
<dbReference type="SUPFAM" id="SSF143587">
    <property type="entry name" value="SARS receptor-binding domain-like"/>
    <property type="match status" value="1"/>
</dbReference>
<dbReference type="PROSITE" id="PS51921">
    <property type="entry name" value="BCOV_S1_CTD"/>
    <property type="match status" value="1"/>
</dbReference>
<dbReference type="PROSITE" id="PS51922">
    <property type="entry name" value="BCOV_S1_NTD"/>
    <property type="match status" value="1"/>
</dbReference>
<dbReference type="PROSITE" id="PS51923">
    <property type="entry name" value="COV_S2_HR1"/>
    <property type="match status" value="1"/>
</dbReference>
<dbReference type="PROSITE" id="PS51924">
    <property type="entry name" value="COV_S2_HR2"/>
    <property type="match status" value="1"/>
</dbReference>
<sequence>MLFVFILFLPSCLGYIGDFRCIQLVNSNGANVSAPSISTETVEVSQGLGTYYVLDRVYLNATLLLTGYYPVDGSKFRNLALRGTNSVSLSWFQPPYLNQFNDGIFAKVQNLKTSTPSGATAYFPTIVIGSLFGYTSYTVVIEPYNGVIMASVCQYTICQLPYTDCKPNTNGNKLIGFWHTDVKPPICVLKRNFTLNVNADAFYFHFYQHGGTFYAYYADKPSATTFLFSVYIGDILTQYYVLPFICNPTAGSTFAPRYWVTPLVKRQYLFNFNQKGVITSAVDCASSYTSEIKCKTQSMLPSTGVYELSGYTVQPVGVVYRRVANLPACNIEEWLTARSVPSPLNWERKTFQNCNFNLSSLLRYVQAESLFCNNIDASKVYGRCFGSISVDKFAVPRSRQVDLQLGNSGFLQTANYKIDTAATSCQLHYTLPKNNVTINNHNPSSWNRRYGFNDAGVFGKNQHDVVYAQQCFTVRSSYCPCAQPDIVSPCTTQTKPKSAFVNVGDHCEGLGVLEDNCGNADPHKGCICANNSFIGWSHDTCLVNDRCQIFANILLNGINSGTTCSTDLQLPNTEVVTGICVKYDLYGITGQGVFKEVKADYYNSWQTLLYDVNGNLNGFRDLTTNKTYTIRSCYSGRVSAAFHKDAPEPALLYRNINCSYVFSNNISREENPLNYFDSYLGCVVNADNRTDEALPNCDLRMGAGLCVDYSKSRRAHRSVSTGYRLTTFEPYTPMLVNDSVQSVDGLYEMQIPTNFTIGHHEEFIQTRSPKVTIDCAAFVCGDNTACRQQLVEYGSFCVNVNAILNEVNNLLDNMQLQVASALMQGVTISSRLPDGISGPIDDINFSPLLGCIGSTCAEDGNGPSAIRGRSAIEDLLFDKVKLSDVGFVEAYNNCTGGQEVRDLLCVQSFNGIKVLPPVLSESQISGYTTGATAAAMFPPWSAAAGVPFSLSVQYRINGLGVTMNVLSENQKMIASAFNNALGAIQDGFDATNSALGKIQSVVNANAEALNNLLNQLSNRFGAISASLQEILTRLEAVEAKAQIDRLINGRLTALNAYISKQLSDSTLIKVSAAQAIEKVNECVKSQTTRINFCGNGNHILSLVQNAPYGLYFIHFSYVPISFTTANVSPGLCISGDRGLAPKAGYFVQDDGEWKFTGSSYYYPEPITDKNSVIMSSCAVNYTKAPEVFLNTSIPNPPDFKEELDKWFKNQTSIAPDLSLDFEKLNVTLLDLTYEMNRIQDAIKKLNESYINLKEVGTYEMYVKWPWYVWLLIGLAGVAVCVLLFFICCCTGCGSCCFKKCGNCCDEYGGHQDSIVIHNISSHED</sequence>
<reference key="1">
    <citation type="journal article" date="1987" name="Virology">
        <title>Primary structure of the glycoprotein E2 of coronavirus MHV-A59 and identification of the trypsin cleavage site.</title>
        <authorList>
            <person name="Luytjes W."/>
            <person name="Sturman L.S."/>
            <person name="Bredenbeek P.J."/>
            <person name="Charite J."/>
            <person name="van der Zeijst B.A.M."/>
            <person name="Horzinek M.C."/>
            <person name="Spaan W.J.M."/>
        </authorList>
    </citation>
    <scope>NUCLEOTIDE SEQUENCE [GENOMIC RNA]</scope>
</reference>
<reference key="2">
    <citation type="journal article" date="1997" name="Virology">
        <title>Altered pathogenesis of a mutant of the murine coronavirus MHV-A59 is associated with a Q159L amino acid substitution in the spike protein.</title>
        <authorList>
            <person name="Leparc-Goffart I."/>
            <person name="Hingley S.T."/>
            <person name="Chua M.M."/>
            <person name="Jiang X."/>
            <person name="Lavi E."/>
            <person name="Weiss S.R."/>
        </authorList>
    </citation>
    <scope>NUCLEOTIDE SEQUENCE [GENOMIC RNA]</scope>
    <source>
        <strain>Isolate C12 mutant</strain>
    </source>
</reference>
<reference key="3">
    <citation type="journal article" date="2000" name="J. Virol.">
        <title>Assembly of spikes into coronavirus particles is mediated by the carboxy-terminal domain of the spike protein.</title>
        <authorList>
            <person name="Godeke G.J."/>
            <person name="de Haan C.A."/>
            <person name="Rossen J.W."/>
            <person name="Vennema H."/>
            <person name="Rottier P.J."/>
        </authorList>
    </citation>
    <scope>INTERACTION WITH M PROTEIN</scope>
</reference>
<reference key="4">
    <citation type="journal article" date="1991" name="J. Virol.">
        <title>Cloning of the mouse hepatitis virus (MHV) receptor: expression in human and hamster cell lines confers susceptibility to MHV.</title>
        <authorList>
            <person name="Dveksler G.S."/>
            <person name="Pensiero M.N."/>
            <person name="Cardellichio C.B."/>
            <person name="Williams R.K."/>
            <person name="Jiang G.-S."/>
            <person name="Holmes K.V."/>
            <person name="Dieffenbach C.W."/>
        </authorList>
    </citation>
    <scope>INTERACTION WITH MURINE CEACAM1</scope>
</reference>
<reference key="5">
    <citation type="journal article" date="1993" name="J. Virol.">
        <title>Several members of the mouse carcinoembryonic antigen-related glycoprotein family are functional receptors for the coronavirus mouse hepatitis virus-A59.</title>
        <authorList>
            <person name="Dveksler G.S."/>
            <person name="Dieffenback C.B."/>
            <person name="Cardellichio C.B."/>
            <person name="McCuaig K."/>
            <person name="Pensiero M.N."/>
            <person name="Jiang G.-S."/>
            <person name="Beauchemin N."/>
            <person name="Holmes K.V."/>
        </authorList>
    </citation>
    <scope>INTERACTION WITH MURINE CEACAM1</scope>
</reference>
<reference key="6">
    <citation type="journal article" date="1994" name="J. Virol.">
        <title>Bgp2, a new member of the carcinoembryonic antigen-related gene family, encodes an alternative receptor for mouse hepatitis viruses.</title>
        <authorList>
            <person name="Nedellec P."/>
            <person name="Dveksler G.S."/>
            <person name="Daniels E."/>
            <person name="Turbide C."/>
            <person name="Chow B."/>
            <person name="Basile A.A."/>
            <person name="Holmes K.V."/>
            <person name="Beauchemin N."/>
        </authorList>
    </citation>
    <scope>INTERACTION WITH MURINE CEACAM2</scope>
</reference>
<reference key="7">
    <citation type="journal article" date="2004" name="J. Virol.">
        <title>Cleavage inhibition of the murine coronavirus spike protein by a furin-like enzyme affects cell-cell but not virus-cell fusion.</title>
        <authorList>
            <person name="de Haan C.A.M."/>
            <person name="Stadler K."/>
            <person name="Godeke G.-J."/>
            <person name="Bosch B.J."/>
            <person name="Rottier P.J."/>
        </authorList>
    </citation>
    <scope>CLEAVAGE BY HOST FURIN OR FURIN-LIKE ENZYME</scope>
</reference>
<reference key="8">
    <citation type="journal article" date="2005" name="Virology">
        <title>Substitutions of conserved amino acids in the receptor-binding domain of the spike glycoprotein affect utilization of murine CEACAM1a by the murine coronavirus MHV-A59.</title>
        <authorList>
            <person name="Thackray L.B."/>
            <person name="Turner B.C."/>
            <person name="Holmes K.V."/>
        </authorList>
    </citation>
    <scope>MUTAGENESIS OF SER-33; THR-62; LEU-65; 79-LEU--THR-82; TYR-162 AND LYS-183</scope>
</reference>
<reference key="9">
    <citation type="journal article" date="2005" name="J. Virol.">
        <title>Murine coronavirus requires lipid rafts for virus entry and cell-cell fusion but not for virus release.</title>
        <authorList>
            <person name="Choi K.S."/>
            <person name="Aizaki H."/>
            <person name="Lai M.M."/>
        </authorList>
    </citation>
    <scope>FUNCTION</scope>
</reference>
<reference key="10">
    <citation type="journal article" date="2004" name="J. Biol. Chem.">
        <title>Structural basis for coronavirus-mediated membrane fusion. Crystal structure of mouse hepatitis virus spike protein fusion core.</title>
        <authorList>
            <person name="Xu Y."/>
            <person name="Liu Y."/>
            <person name="Lou Z."/>
            <person name="Qin L."/>
            <person name="Li X."/>
            <person name="Bai Z."/>
            <person name="Pang H."/>
            <person name="Tien P."/>
            <person name="Gao G.F."/>
            <person name="Rao Z."/>
        </authorList>
    </citation>
    <scope>X-RAY CRYSTALLOGRAPHY (2.5 ANGSTROMS) OF 969-1024</scope>
</reference>
<keyword id="KW-0002">3D-structure</keyword>
<keyword id="KW-0175">Coiled coil</keyword>
<keyword id="KW-1015">Disulfide bond</keyword>
<keyword id="KW-1170">Fusion of virus membrane with host endosomal membrane</keyword>
<keyword id="KW-1168">Fusion of virus membrane with host membrane</keyword>
<keyword id="KW-0325">Glycoprotein</keyword>
<keyword id="KW-1032">Host cell membrane</keyword>
<keyword id="KW-1043">Host membrane</keyword>
<keyword id="KW-0945">Host-virus interaction</keyword>
<keyword id="KW-0449">Lipoprotein</keyword>
<keyword id="KW-0472">Membrane</keyword>
<keyword id="KW-0564">Palmitate</keyword>
<keyword id="KW-1185">Reference proteome</keyword>
<keyword id="KW-0732">Signal</keyword>
<keyword id="KW-0812">Transmembrane</keyword>
<keyword id="KW-1133">Transmembrane helix</keyword>
<keyword id="KW-1161">Viral attachment to host cell</keyword>
<keyword id="KW-0261">Viral envelope protein</keyword>
<keyword id="KW-1162">Viral penetration into host cytoplasm</keyword>
<keyword id="KW-0946">Virion</keyword>
<keyword id="KW-0843">Virulence</keyword>
<keyword id="KW-1160">Virus entry into host cell</keyword>
<organismHost>
    <name type="scientific">Mus musculus</name>
    <name type="common">Mouse</name>
    <dbReference type="NCBI Taxonomy" id="10090"/>
</organismHost>
<comment type="function">
    <molecule>Spike protein S1</molecule>
    <text evidence="1 6">Attaches the virion to the cell membrane by interacting with host receptor, initiating the infection. Interacts with murine CEACAM1 to mediate viral entry.</text>
</comment>
<comment type="function">
    <molecule>Spike protein S2</molecule>
    <text evidence="1 6">Mediates fusion of the virion and cellular membranes by acting as a class I viral fusion protein. Under the current model, the protein has at least three conformational states: pre-fusion native state, pre-hairpin intermediate state, and post-fusion hairpin state. During viral and target cell membrane fusion, the coiled coil regions (heptad repeats) assume a trimer-of-hairpins structure, positioning the fusion peptide in close proximity to the C-terminal region of the ectodomain. The formation of this structure appears to drive apposition and subsequent fusion of viral and target cell membranes.</text>
</comment>
<comment type="function">
    <molecule>Spike protein S2'</molecule>
    <text evidence="1">Acts as a viral fusion peptide which is unmasked following S2 cleavage occurring upon virus endocytosis.</text>
</comment>
<comment type="subunit">
    <text evidence="1 4 7 8 9">Homotrimer; each monomer consists of a S1 and a S2 subunit. The resulting peplomers protrude from the virus surface as spikes (By similarity). Cytoplasmic tail interacts with M protein. S1 interacts with murine CEACAM1, and weakly with murine CEACAM2 in tissue culture.</text>
</comment>
<comment type="interaction">
    <interactant intactId="EBI-16196052">
        <id>P11224</id>
    </interactant>
    <interactant intactId="EBI-16196052">
        <id>P11224</id>
        <label>S</label>
    </interactant>
    <organismsDiffer>false</organismsDiffer>
    <experiments>3</experiments>
</comment>
<comment type="interaction">
    <interactant intactId="EBI-16196052">
        <id>P11224</id>
    </interactant>
    <interactant intactId="EBI-25747689">
        <id>Q3LFS9</id>
        <label>Ceacam1</label>
    </interactant>
    <organismsDiffer>true</organismsDiffer>
    <experiments>2</experiments>
</comment>
<comment type="subcellular location">
    <subcellularLocation>
        <location evidence="1">Virion membrane</location>
        <topology evidence="1">Single-pass type I membrane protein</topology>
    </subcellularLocation>
    <subcellularLocation>
        <location evidence="1">Host endoplasmic reticulum-Golgi intermediate compartment membrane</location>
        <topology evidence="1">Single-pass type I membrane protein</topology>
    </subcellularLocation>
    <subcellularLocation>
        <location evidence="1">Host cell membrane</location>
        <topology evidence="1">Single-pass type I membrane protein</topology>
    </subcellularLocation>
    <text evidence="1">Accumulates in the endoplasmic reticulum-Golgi intermediate compartment, where it participates in virus particle assembly. Some S oligomers are transported to the host plasma membrane, where they may mediate cell-cell fusion.</text>
</comment>
<comment type="domain">
    <text evidence="1">Fusion peptide 1 (FP1) and fusion peptide 2 (FP2) function cooperatively and have a membrane-ordering effect on lipid headgroups and shallow hydrophobic regions of target bilayers. They are considered as two domains of an extended, bipartite FP. The membrane-ordering activity is calcium-dependent and also dependent on correct folding, which is maintained by an internal disulfide bond in FP2.</text>
</comment>
<comment type="PTM">
    <text evidence="1">Specific enzymatic cleavages in vivo yield mature proteins. The precursor is processed into S1 and S2 by host cell furin or another cellular protease to yield the mature S1 and S2 proteins. Additionally, a second cleavage leads to the release of a fusion peptide after viral attachment to host cell receptor.</text>
</comment>
<comment type="PTM">
    <text evidence="1">The cytoplasmic Cys-rich domain is palmitoylated. Spike glycoprotein is digested within host endosomes.</text>
</comment>
<comment type="similarity">
    <text evidence="1">Belongs to the betacoronaviruses spike protein family.</text>
</comment>
<gene>
    <name evidence="1" type="primary">S</name>
    <name type="ORF">3</name>
</gene>
<proteinExistence type="evidence at protein level"/>
<name>SPIKE_CVMA5</name>
<accession>P11224</accession>
<accession>O39227</accession>